<protein>
    <recommendedName>
        <fullName evidence="2 4">Superoxide dismutase [Cu-Zn]</fullName>
        <shortName evidence="4">CuZnSOD</shortName>
        <ecNumber evidence="2">1.15.1.1</ecNumber>
    </recommendedName>
    <alternativeName>
        <fullName evidence="4">RvSOD15</fullName>
    </alternativeName>
</protein>
<feature type="signal peptide" evidence="1">
    <location>
        <begin position="1"/>
        <end position="20"/>
    </location>
</feature>
<feature type="chain" id="PRO_5008898852" description="Superoxide dismutase [Cu-Zn]" evidence="1">
    <location>
        <begin position="21"/>
        <end position="194"/>
    </location>
</feature>
<feature type="binding site" evidence="3 7 8">
    <location>
        <position position="85"/>
    </location>
    <ligand>
        <name>Cu cation</name>
        <dbReference type="ChEBI" id="CHEBI:23378"/>
        <note>catalytic</note>
    </ligand>
</feature>
<feature type="binding site" evidence="3 7 8">
    <location>
        <position position="104"/>
    </location>
    <ligand>
        <name>Cu cation</name>
        <dbReference type="ChEBI" id="CHEBI:23378"/>
        <note>catalytic</note>
    </ligand>
</feature>
<feature type="binding site" evidence="3 7 8">
    <location>
        <position position="104"/>
    </location>
    <ligand>
        <name>Zn(2+)</name>
        <dbReference type="ChEBI" id="CHEBI:29105"/>
        <note>structural</note>
    </ligand>
</feature>
<feature type="binding site" evidence="3 7 8">
    <location>
        <position position="112"/>
    </location>
    <ligand>
        <name>Zn(2+)</name>
        <dbReference type="ChEBI" id="CHEBI:29105"/>
        <note>structural</note>
    </ligand>
</feature>
<feature type="binding site" evidence="3 7 8">
    <location>
        <position position="121"/>
    </location>
    <ligand>
        <name>Zn(2+)</name>
        <dbReference type="ChEBI" id="CHEBI:29105"/>
        <note>structural</note>
    </ligand>
</feature>
<feature type="binding site" evidence="3 7 8">
    <location>
        <position position="124"/>
    </location>
    <ligand>
        <name>Zn(2+)</name>
        <dbReference type="ChEBI" id="CHEBI:29105"/>
        <note>structural</note>
    </ligand>
</feature>
<feature type="binding site" evidence="3 7 8">
    <location>
        <position position="162"/>
    </location>
    <ligand>
        <name>Cu cation</name>
        <dbReference type="ChEBI" id="CHEBI:23378"/>
        <note>catalytic</note>
    </ligand>
</feature>
<feature type="disulfide bond" evidence="3 7 8">
    <location>
        <begin position="96"/>
        <end position="188"/>
    </location>
</feature>
<feature type="helix" evidence="10">
    <location>
        <begin position="32"/>
        <end position="34"/>
    </location>
</feature>
<feature type="strand" evidence="10">
    <location>
        <begin position="38"/>
        <end position="45"/>
    </location>
</feature>
<feature type="helix" evidence="10">
    <location>
        <begin position="48"/>
        <end position="50"/>
    </location>
</feature>
<feature type="strand" evidence="10">
    <location>
        <begin position="54"/>
        <end position="61"/>
    </location>
</feature>
<feature type="strand" evidence="10">
    <location>
        <begin position="68"/>
        <end position="76"/>
    </location>
</feature>
<feature type="strand" evidence="10">
    <location>
        <begin position="79"/>
        <end position="88"/>
    </location>
</feature>
<feature type="turn" evidence="10">
    <location>
        <begin position="93"/>
        <end position="96"/>
    </location>
</feature>
<feature type="strand" evidence="9">
    <location>
        <begin position="117"/>
        <end position="119"/>
    </location>
</feature>
<feature type="strand" evidence="10">
    <location>
        <begin position="124"/>
        <end position="130"/>
    </location>
</feature>
<feature type="strand" evidence="10">
    <location>
        <begin position="136"/>
        <end position="144"/>
    </location>
</feature>
<feature type="strand" evidence="10">
    <location>
        <begin position="146"/>
        <end position="150"/>
    </location>
</feature>
<feature type="strand" evidence="10">
    <location>
        <begin position="157"/>
        <end position="164"/>
    </location>
</feature>
<feature type="helix" evidence="10">
    <location>
        <begin position="176"/>
        <end position="179"/>
    </location>
</feature>
<feature type="strand" evidence="10">
    <location>
        <begin position="184"/>
        <end position="190"/>
    </location>
</feature>
<gene>
    <name evidence="4 5" type="ORF">RvY_13070</name>
</gene>
<comment type="function">
    <text evidence="2">Destroys radicals which are normally produced within the cells and which are toxic to biological systems.</text>
</comment>
<comment type="catalytic activity">
    <reaction evidence="2">
        <text>2 superoxide + 2 H(+) = H2O2 + O2</text>
        <dbReference type="Rhea" id="RHEA:20696"/>
        <dbReference type="ChEBI" id="CHEBI:15378"/>
        <dbReference type="ChEBI" id="CHEBI:15379"/>
        <dbReference type="ChEBI" id="CHEBI:16240"/>
        <dbReference type="ChEBI" id="CHEBI:18421"/>
        <dbReference type="EC" id="1.15.1.1"/>
    </reaction>
</comment>
<comment type="cofactor">
    <cofactor evidence="2 3">
        <name>Cu cation</name>
        <dbReference type="ChEBI" id="CHEBI:23378"/>
    </cofactor>
    <text evidence="2 3">Binds 1 copper ion per subunit.</text>
</comment>
<comment type="cofactor">
    <cofactor evidence="2 3">
        <name>Zn(2+)</name>
        <dbReference type="ChEBI" id="CHEBI:29105"/>
    </cofactor>
    <text evidence="2 3">Binds 1 zinc ion per subunit.</text>
</comment>
<comment type="subunit">
    <text evidence="3">Homodimer.</text>
</comment>
<comment type="similarity">
    <text evidence="2">Belongs to the Cu-Zn superoxide dismutase family.</text>
</comment>
<accession>A0A1D1VU85</accession>
<sequence length="194" mass="20109">MTRPLALIIFLVAILTNTDPSRSDAGSDPVNYLFRGPVTAVAAIAGEGEHAGIKGSLTFLQKSLDGRTVINGTISGLPEGKHGLHIVDSGDMTKGCYITTAKGHLNPFNLSHGAPSDSARHVGDLGNIYADDTGISVINLTDTVISLFPTPAFVIGRILVIHTTYDDLGRGGSPVSKVNGNAGGRLACGIISYV</sequence>
<proteinExistence type="evidence at protein level"/>
<reference evidence="5 6" key="1">
    <citation type="journal article" date="2016" name="Nat. Commun.">
        <title>Extremotolerant tardigrade genome and improved radiotolerance of human cultured cells by tardigrade-unique protein.</title>
        <authorList>
            <person name="Hashimoto T."/>
            <person name="Horikawa D.D."/>
            <person name="Saito Y."/>
            <person name="Kuwahara H."/>
            <person name="Kozuka-Hata H."/>
            <person name="Shin-I T."/>
            <person name="Minakuchi Y."/>
            <person name="Ohishi K."/>
            <person name="Motoyama A."/>
            <person name="Aizu T."/>
            <person name="Enomoto A."/>
            <person name="Kondo K."/>
            <person name="Tanaka S."/>
            <person name="Hara Y."/>
            <person name="Koshikawa S."/>
            <person name="Sagara H."/>
            <person name="Miura T."/>
            <person name="Yokobori S."/>
            <person name="Miyagawa K."/>
            <person name="Suzuki Y."/>
            <person name="Kubo T."/>
            <person name="Oyama M."/>
            <person name="Kohara Y."/>
            <person name="Fujiyama A."/>
            <person name="Arakawa K."/>
            <person name="Katayama T."/>
            <person name="Toyoda A."/>
            <person name="Kunieda T."/>
        </authorList>
    </citation>
    <scope>NUCLEOTIDE SEQUENCE [LARGE SCALE GENOMIC DNA]</scope>
    <source>
        <strain evidence="5 6">YOKOZUNA-1</strain>
    </source>
</reference>
<reference evidence="7" key="2">
    <citation type="journal article" date="2023" name="Acta Crystallogr. F Struct. Biol. Commun.">
        <title>Structure of a superoxide dismutase from a tardigrade: Ramazzottius varieornatus strain YOKOZUNA-1.</title>
        <authorList>
            <person name="Sim K.S."/>
            <person name="Inoue T."/>
        </authorList>
    </citation>
    <scope>X-RAY CRYSTALLOGRAPHY (2.10 ANGSTROMS) OF WILD-TYPE AND MUTANT HIS-87 IN COMPLEX WITH COPPER AND ZINC IONS</scope>
    <scope>COFACTOR</scope>
    <scope>SUBUNIT</scope>
    <scope>DISULFIDE BOND</scope>
    <source>
        <strain evidence="4">YOKOZUNA-1</strain>
    </source>
</reference>
<name>SODC_RAMVA</name>
<organism evidence="5 6">
    <name type="scientific">Ramazzottius varieornatus</name>
    <name type="common">Water bear</name>
    <name type="synonym">Tardigrade</name>
    <dbReference type="NCBI Taxonomy" id="947166"/>
    <lineage>
        <taxon>Eukaryota</taxon>
        <taxon>Metazoa</taxon>
        <taxon>Ecdysozoa</taxon>
        <taxon>Tardigrada</taxon>
        <taxon>Eutardigrada</taxon>
        <taxon>Parachela</taxon>
        <taxon>Hypsibioidea</taxon>
        <taxon>Ramazzottiidae</taxon>
        <taxon>Ramazzottius</taxon>
    </lineage>
</organism>
<keyword id="KW-0002">3D-structure</keyword>
<keyword id="KW-0049">Antioxidant</keyword>
<keyword id="KW-0186">Copper</keyword>
<keyword id="KW-1015">Disulfide bond</keyword>
<keyword id="KW-0479">Metal-binding</keyword>
<keyword id="KW-0560">Oxidoreductase</keyword>
<keyword id="KW-1185">Reference proteome</keyword>
<keyword id="KW-0732">Signal</keyword>
<keyword id="KW-0862">Zinc</keyword>
<evidence type="ECO:0000255" key="1"/>
<evidence type="ECO:0000255" key="2">
    <source>
        <dbReference type="RuleBase" id="RU000393"/>
    </source>
</evidence>
<evidence type="ECO:0000269" key="3">
    <source>
    </source>
</evidence>
<evidence type="ECO:0000303" key="4">
    <source>
    </source>
</evidence>
<evidence type="ECO:0000312" key="5">
    <source>
        <dbReference type="EMBL" id="GAV02514.1"/>
    </source>
</evidence>
<evidence type="ECO:0000312" key="6">
    <source>
        <dbReference type="Proteomes" id="UP000186922"/>
    </source>
</evidence>
<evidence type="ECO:0007744" key="7">
    <source>
        <dbReference type="PDB" id="7YPP"/>
    </source>
</evidence>
<evidence type="ECO:0007744" key="8">
    <source>
        <dbReference type="PDB" id="7YPR"/>
    </source>
</evidence>
<evidence type="ECO:0007829" key="9">
    <source>
        <dbReference type="PDB" id="7YPP"/>
    </source>
</evidence>
<evidence type="ECO:0007829" key="10">
    <source>
        <dbReference type="PDB" id="7YPR"/>
    </source>
</evidence>
<dbReference type="EC" id="1.15.1.1" evidence="2"/>
<dbReference type="EMBL" id="BDGG01000008">
    <property type="protein sequence ID" value="GAV02514.1"/>
    <property type="molecule type" value="Genomic_DNA"/>
</dbReference>
<dbReference type="PDB" id="7YPP">
    <property type="method" value="X-ray"/>
    <property type="resolution" value="2.20 A"/>
    <property type="chains" value="A/B/C/D/E/F=1-194"/>
</dbReference>
<dbReference type="PDB" id="7YPR">
    <property type="method" value="X-ray"/>
    <property type="resolution" value="2.10 A"/>
    <property type="chains" value="A/B/C/D/E/F=1-194"/>
</dbReference>
<dbReference type="PDBsum" id="7YPP"/>
<dbReference type="PDBsum" id="7YPR"/>
<dbReference type="SMR" id="A0A1D1VU85"/>
<dbReference type="STRING" id="947166.A0A1D1VU85"/>
<dbReference type="OrthoDB" id="2015551at2759"/>
<dbReference type="Proteomes" id="UP000186922">
    <property type="component" value="Unassembled WGS sequence"/>
</dbReference>
<dbReference type="GO" id="GO:0005507">
    <property type="term" value="F:copper ion binding"/>
    <property type="evidence" value="ECO:0000314"/>
    <property type="project" value="UniProtKB"/>
</dbReference>
<dbReference type="GO" id="GO:0042802">
    <property type="term" value="F:identical protein binding"/>
    <property type="evidence" value="ECO:0000314"/>
    <property type="project" value="UniProtKB"/>
</dbReference>
<dbReference type="GO" id="GO:0042803">
    <property type="term" value="F:protein homodimerization activity"/>
    <property type="evidence" value="ECO:0000314"/>
    <property type="project" value="UniProtKB"/>
</dbReference>
<dbReference type="GO" id="GO:0004784">
    <property type="term" value="F:superoxide dismutase activity"/>
    <property type="evidence" value="ECO:0000250"/>
    <property type="project" value="UniProtKB"/>
</dbReference>
<dbReference type="GO" id="GO:0008270">
    <property type="term" value="F:zinc ion binding"/>
    <property type="evidence" value="ECO:0000314"/>
    <property type="project" value="UniProtKB"/>
</dbReference>
<dbReference type="GO" id="GO:0019430">
    <property type="term" value="P:removal of superoxide radicals"/>
    <property type="evidence" value="ECO:0000250"/>
    <property type="project" value="UniProtKB"/>
</dbReference>
<dbReference type="CDD" id="cd00305">
    <property type="entry name" value="Cu-Zn_Superoxide_Dismutase"/>
    <property type="match status" value="1"/>
</dbReference>
<dbReference type="Gene3D" id="2.60.40.200">
    <property type="entry name" value="Superoxide dismutase, copper/zinc binding domain"/>
    <property type="match status" value="1"/>
</dbReference>
<dbReference type="InterPro" id="IPR036423">
    <property type="entry name" value="SOD-like_Cu/Zn_dom_sf"/>
</dbReference>
<dbReference type="InterPro" id="IPR024134">
    <property type="entry name" value="SOD_Cu/Zn_/chaperone"/>
</dbReference>
<dbReference type="InterPro" id="IPR018152">
    <property type="entry name" value="SOD_Cu/Zn_BS"/>
</dbReference>
<dbReference type="InterPro" id="IPR001424">
    <property type="entry name" value="SOD_Cu_Zn_dom"/>
</dbReference>
<dbReference type="PANTHER" id="PTHR10003">
    <property type="entry name" value="SUPEROXIDE DISMUTASE CU-ZN -RELATED"/>
    <property type="match status" value="1"/>
</dbReference>
<dbReference type="Pfam" id="PF00080">
    <property type="entry name" value="Sod_Cu"/>
    <property type="match status" value="1"/>
</dbReference>
<dbReference type="PRINTS" id="PR00068">
    <property type="entry name" value="CUZNDISMTASE"/>
</dbReference>
<dbReference type="SUPFAM" id="SSF49329">
    <property type="entry name" value="Cu,Zn superoxide dismutase-like"/>
    <property type="match status" value="1"/>
</dbReference>
<dbReference type="PROSITE" id="PS00332">
    <property type="entry name" value="SOD_CU_ZN_2"/>
    <property type="match status" value="1"/>
</dbReference>